<evidence type="ECO:0000255" key="1">
    <source>
        <dbReference type="HAMAP-Rule" id="MF_01306"/>
    </source>
</evidence>
<evidence type="ECO:0000305" key="2"/>
<organism>
    <name type="scientific">Shewanella baltica (strain OS195)</name>
    <dbReference type="NCBI Taxonomy" id="399599"/>
    <lineage>
        <taxon>Bacteria</taxon>
        <taxon>Pseudomonadati</taxon>
        <taxon>Pseudomonadota</taxon>
        <taxon>Gammaproteobacteria</taxon>
        <taxon>Alteromonadales</taxon>
        <taxon>Shewanellaceae</taxon>
        <taxon>Shewanella</taxon>
    </lineage>
</organism>
<sequence length="206" mass="23439">MARYLGPKLKLSRREGTDLFLKSGVRAIDSKCKLETAPGQHGARKPRLSEYGTQLREKQKVRRIYGVLEKQFRNYYKDAARTKGNTGENLLQLLETRLDNVVYRMGFGATRAESRQLVSHKSIMVNGRVVNIPSFKVSANDVVSIREKSRTQARIKAALEVAAQREKPTWVEVDNAKMEGAFKRVPERSDLSAEINEQLIVELYSK</sequence>
<keyword id="KW-0687">Ribonucleoprotein</keyword>
<keyword id="KW-0689">Ribosomal protein</keyword>
<keyword id="KW-0694">RNA-binding</keyword>
<keyword id="KW-0699">rRNA-binding</keyword>
<protein>
    <recommendedName>
        <fullName evidence="1">Small ribosomal subunit protein uS4</fullName>
    </recommendedName>
    <alternativeName>
        <fullName evidence="2">30S ribosomal protein S4</fullName>
    </alternativeName>
</protein>
<gene>
    <name evidence="1" type="primary">rpsD</name>
    <name type="ordered locus">Sbal195_0223</name>
</gene>
<accession>A9KWC5</accession>
<proteinExistence type="inferred from homology"/>
<feature type="chain" id="PRO_1000085990" description="Small ribosomal subunit protein uS4">
    <location>
        <begin position="1"/>
        <end position="206"/>
    </location>
</feature>
<feature type="domain" description="S4 RNA-binding" evidence="1">
    <location>
        <begin position="96"/>
        <end position="156"/>
    </location>
</feature>
<reference key="1">
    <citation type="submission" date="2007-11" db="EMBL/GenBank/DDBJ databases">
        <title>Complete sequence of chromosome of Shewanella baltica OS195.</title>
        <authorList>
            <consortium name="US DOE Joint Genome Institute"/>
            <person name="Copeland A."/>
            <person name="Lucas S."/>
            <person name="Lapidus A."/>
            <person name="Barry K."/>
            <person name="Glavina del Rio T."/>
            <person name="Dalin E."/>
            <person name="Tice H."/>
            <person name="Pitluck S."/>
            <person name="Chain P."/>
            <person name="Malfatti S."/>
            <person name="Shin M."/>
            <person name="Vergez L."/>
            <person name="Schmutz J."/>
            <person name="Larimer F."/>
            <person name="Land M."/>
            <person name="Hauser L."/>
            <person name="Kyrpides N."/>
            <person name="Kim E."/>
            <person name="Brettar I."/>
            <person name="Rodrigues J."/>
            <person name="Konstantinidis K."/>
            <person name="Klappenbach J."/>
            <person name="Hofle M."/>
            <person name="Tiedje J."/>
            <person name="Richardson P."/>
        </authorList>
    </citation>
    <scope>NUCLEOTIDE SEQUENCE [LARGE SCALE GENOMIC DNA]</scope>
    <source>
        <strain>OS195</strain>
    </source>
</reference>
<name>RS4_SHEB9</name>
<dbReference type="EMBL" id="CP000891">
    <property type="protein sequence ID" value="ABX47405.1"/>
    <property type="molecule type" value="Genomic_DNA"/>
</dbReference>
<dbReference type="RefSeq" id="WP_006083575.1">
    <property type="nucleotide sequence ID" value="NC_009997.1"/>
</dbReference>
<dbReference type="SMR" id="A9KWC5"/>
<dbReference type="GeneID" id="11770579"/>
<dbReference type="KEGG" id="sbn:Sbal195_0223"/>
<dbReference type="HOGENOM" id="CLU_092403_0_2_6"/>
<dbReference type="Proteomes" id="UP000000770">
    <property type="component" value="Chromosome"/>
</dbReference>
<dbReference type="GO" id="GO:0015935">
    <property type="term" value="C:small ribosomal subunit"/>
    <property type="evidence" value="ECO:0007669"/>
    <property type="project" value="InterPro"/>
</dbReference>
<dbReference type="GO" id="GO:0019843">
    <property type="term" value="F:rRNA binding"/>
    <property type="evidence" value="ECO:0007669"/>
    <property type="project" value="UniProtKB-UniRule"/>
</dbReference>
<dbReference type="GO" id="GO:0003735">
    <property type="term" value="F:structural constituent of ribosome"/>
    <property type="evidence" value="ECO:0007669"/>
    <property type="project" value="InterPro"/>
</dbReference>
<dbReference type="GO" id="GO:0042274">
    <property type="term" value="P:ribosomal small subunit biogenesis"/>
    <property type="evidence" value="ECO:0007669"/>
    <property type="project" value="TreeGrafter"/>
</dbReference>
<dbReference type="GO" id="GO:0006412">
    <property type="term" value="P:translation"/>
    <property type="evidence" value="ECO:0007669"/>
    <property type="project" value="UniProtKB-UniRule"/>
</dbReference>
<dbReference type="CDD" id="cd00165">
    <property type="entry name" value="S4"/>
    <property type="match status" value="1"/>
</dbReference>
<dbReference type="FunFam" id="1.10.1050.10:FF:000001">
    <property type="entry name" value="30S ribosomal protein S4"/>
    <property type="match status" value="1"/>
</dbReference>
<dbReference type="FunFam" id="3.10.290.10:FF:000001">
    <property type="entry name" value="30S ribosomal protein S4"/>
    <property type="match status" value="1"/>
</dbReference>
<dbReference type="Gene3D" id="1.10.1050.10">
    <property type="entry name" value="Ribosomal Protein S4 Delta 41, Chain A, domain 1"/>
    <property type="match status" value="1"/>
</dbReference>
<dbReference type="Gene3D" id="3.10.290.10">
    <property type="entry name" value="RNA-binding S4 domain"/>
    <property type="match status" value="1"/>
</dbReference>
<dbReference type="HAMAP" id="MF_01306_B">
    <property type="entry name" value="Ribosomal_uS4_B"/>
    <property type="match status" value="1"/>
</dbReference>
<dbReference type="InterPro" id="IPR022801">
    <property type="entry name" value="Ribosomal_uS4"/>
</dbReference>
<dbReference type="InterPro" id="IPR005709">
    <property type="entry name" value="Ribosomal_uS4_bac-type"/>
</dbReference>
<dbReference type="InterPro" id="IPR018079">
    <property type="entry name" value="Ribosomal_uS4_CS"/>
</dbReference>
<dbReference type="InterPro" id="IPR001912">
    <property type="entry name" value="Ribosomal_uS4_N"/>
</dbReference>
<dbReference type="InterPro" id="IPR002942">
    <property type="entry name" value="S4_RNA-bd"/>
</dbReference>
<dbReference type="InterPro" id="IPR036986">
    <property type="entry name" value="S4_RNA-bd_sf"/>
</dbReference>
<dbReference type="NCBIfam" id="NF003717">
    <property type="entry name" value="PRK05327.1"/>
    <property type="match status" value="1"/>
</dbReference>
<dbReference type="NCBIfam" id="TIGR01017">
    <property type="entry name" value="rpsD_bact"/>
    <property type="match status" value="1"/>
</dbReference>
<dbReference type="PANTHER" id="PTHR11831">
    <property type="entry name" value="30S 40S RIBOSOMAL PROTEIN"/>
    <property type="match status" value="1"/>
</dbReference>
<dbReference type="PANTHER" id="PTHR11831:SF4">
    <property type="entry name" value="SMALL RIBOSOMAL SUBUNIT PROTEIN US4M"/>
    <property type="match status" value="1"/>
</dbReference>
<dbReference type="Pfam" id="PF00163">
    <property type="entry name" value="Ribosomal_S4"/>
    <property type="match status" value="1"/>
</dbReference>
<dbReference type="Pfam" id="PF01479">
    <property type="entry name" value="S4"/>
    <property type="match status" value="1"/>
</dbReference>
<dbReference type="SMART" id="SM01390">
    <property type="entry name" value="Ribosomal_S4"/>
    <property type="match status" value="1"/>
</dbReference>
<dbReference type="SMART" id="SM00363">
    <property type="entry name" value="S4"/>
    <property type="match status" value="1"/>
</dbReference>
<dbReference type="SUPFAM" id="SSF55174">
    <property type="entry name" value="Alpha-L RNA-binding motif"/>
    <property type="match status" value="1"/>
</dbReference>
<dbReference type="PROSITE" id="PS00632">
    <property type="entry name" value="RIBOSOMAL_S4"/>
    <property type="match status" value="1"/>
</dbReference>
<dbReference type="PROSITE" id="PS50889">
    <property type="entry name" value="S4"/>
    <property type="match status" value="1"/>
</dbReference>
<comment type="function">
    <text evidence="1">One of the primary rRNA binding proteins, it binds directly to 16S rRNA where it nucleates assembly of the body of the 30S subunit.</text>
</comment>
<comment type="function">
    <text evidence="1">With S5 and S12 plays an important role in translational accuracy.</text>
</comment>
<comment type="subunit">
    <text evidence="1">Part of the 30S ribosomal subunit. Contacts protein S5. The interaction surface between S4 and S5 is involved in control of translational fidelity.</text>
</comment>
<comment type="similarity">
    <text evidence="1">Belongs to the universal ribosomal protein uS4 family.</text>
</comment>